<evidence type="ECO:0000255" key="1">
    <source>
        <dbReference type="HAMAP-Rule" id="MF_00384"/>
    </source>
</evidence>
<dbReference type="EC" id="2.7.1.39" evidence="1"/>
<dbReference type="EMBL" id="AE016822">
    <property type="protein sequence ID" value="AAT88622.1"/>
    <property type="molecule type" value="Genomic_DNA"/>
</dbReference>
<dbReference type="RefSeq" id="WP_011185621.1">
    <property type="nucleotide sequence ID" value="NC_006087.1"/>
</dbReference>
<dbReference type="SMR" id="Q6AG73"/>
<dbReference type="STRING" id="281090.Lxx06890"/>
<dbReference type="KEGG" id="lxx:Lxx06890"/>
<dbReference type="eggNOG" id="COG0083">
    <property type="taxonomic scope" value="Bacteria"/>
</dbReference>
<dbReference type="HOGENOM" id="CLU_041243_0_1_11"/>
<dbReference type="UniPathway" id="UPA00050">
    <property type="reaction ID" value="UER00064"/>
</dbReference>
<dbReference type="Proteomes" id="UP000001306">
    <property type="component" value="Chromosome"/>
</dbReference>
<dbReference type="GO" id="GO:0005737">
    <property type="term" value="C:cytoplasm"/>
    <property type="evidence" value="ECO:0007669"/>
    <property type="project" value="UniProtKB-SubCell"/>
</dbReference>
<dbReference type="GO" id="GO:0005524">
    <property type="term" value="F:ATP binding"/>
    <property type="evidence" value="ECO:0007669"/>
    <property type="project" value="UniProtKB-UniRule"/>
</dbReference>
<dbReference type="GO" id="GO:0004413">
    <property type="term" value="F:homoserine kinase activity"/>
    <property type="evidence" value="ECO:0007669"/>
    <property type="project" value="UniProtKB-UniRule"/>
</dbReference>
<dbReference type="GO" id="GO:0009088">
    <property type="term" value="P:threonine biosynthetic process"/>
    <property type="evidence" value="ECO:0007669"/>
    <property type="project" value="UniProtKB-UniRule"/>
</dbReference>
<dbReference type="Gene3D" id="3.30.230.10">
    <property type="match status" value="1"/>
</dbReference>
<dbReference type="Gene3D" id="3.30.70.890">
    <property type="entry name" value="GHMP kinase, C-terminal domain"/>
    <property type="match status" value="1"/>
</dbReference>
<dbReference type="HAMAP" id="MF_00384">
    <property type="entry name" value="Homoser_kinase"/>
    <property type="match status" value="1"/>
</dbReference>
<dbReference type="InterPro" id="IPR013750">
    <property type="entry name" value="GHMP_kinase_C_dom"/>
</dbReference>
<dbReference type="InterPro" id="IPR036554">
    <property type="entry name" value="GHMP_kinase_C_sf"/>
</dbReference>
<dbReference type="InterPro" id="IPR006204">
    <property type="entry name" value="GHMP_kinase_N_dom"/>
</dbReference>
<dbReference type="InterPro" id="IPR006203">
    <property type="entry name" value="GHMP_knse_ATP-bd_CS"/>
</dbReference>
<dbReference type="InterPro" id="IPR000870">
    <property type="entry name" value="Homoserine_kinase"/>
</dbReference>
<dbReference type="InterPro" id="IPR020568">
    <property type="entry name" value="Ribosomal_Su5_D2-typ_SF"/>
</dbReference>
<dbReference type="InterPro" id="IPR014721">
    <property type="entry name" value="Ribsml_uS5_D2-typ_fold_subgr"/>
</dbReference>
<dbReference type="NCBIfam" id="TIGR00191">
    <property type="entry name" value="thrB"/>
    <property type="match status" value="1"/>
</dbReference>
<dbReference type="PANTHER" id="PTHR20861:SF1">
    <property type="entry name" value="HOMOSERINE KINASE"/>
    <property type="match status" value="1"/>
</dbReference>
<dbReference type="PANTHER" id="PTHR20861">
    <property type="entry name" value="HOMOSERINE/4-DIPHOSPHOCYTIDYL-2-C-METHYL-D-ERYTHRITOL KINASE"/>
    <property type="match status" value="1"/>
</dbReference>
<dbReference type="Pfam" id="PF08544">
    <property type="entry name" value="GHMP_kinases_C"/>
    <property type="match status" value="1"/>
</dbReference>
<dbReference type="Pfam" id="PF00288">
    <property type="entry name" value="GHMP_kinases_N"/>
    <property type="match status" value="1"/>
</dbReference>
<dbReference type="PIRSF" id="PIRSF000676">
    <property type="entry name" value="Homoser_kin"/>
    <property type="match status" value="1"/>
</dbReference>
<dbReference type="PRINTS" id="PR00958">
    <property type="entry name" value="HOMSERKINASE"/>
</dbReference>
<dbReference type="SUPFAM" id="SSF55060">
    <property type="entry name" value="GHMP Kinase, C-terminal domain"/>
    <property type="match status" value="1"/>
</dbReference>
<dbReference type="SUPFAM" id="SSF54211">
    <property type="entry name" value="Ribosomal protein S5 domain 2-like"/>
    <property type="match status" value="1"/>
</dbReference>
<dbReference type="PROSITE" id="PS00627">
    <property type="entry name" value="GHMP_KINASES_ATP"/>
    <property type="match status" value="1"/>
</dbReference>
<reference key="1">
    <citation type="journal article" date="2004" name="Mol. Plant Microbe Interact.">
        <title>The genome sequence of the Gram-positive sugarcane pathogen Leifsonia xyli subsp. xyli.</title>
        <authorList>
            <person name="Monteiro-Vitorello C.B."/>
            <person name="Camargo L.E.A."/>
            <person name="Van Sluys M.A."/>
            <person name="Kitajima J.P."/>
            <person name="Truffi D."/>
            <person name="do Amaral A.M."/>
            <person name="Harakava R."/>
            <person name="de Oliveira J.C.F."/>
            <person name="Wood D."/>
            <person name="de Oliveira M.C."/>
            <person name="Miyaki C.Y."/>
            <person name="Takita M.A."/>
            <person name="da Silva A.C.R."/>
            <person name="Furlan L.R."/>
            <person name="Carraro D.M."/>
            <person name="Camarotte G."/>
            <person name="Almeida N.F. Jr."/>
            <person name="Carrer H."/>
            <person name="Coutinho L.L."/>
            <person name="El-Dorry H.A."/>
            <person name="Ferro M.I.T."/>
            <person name="Gagliardi P.R."/>
            <person name="Giglioti E."/>
            <person name="Goldman M.H.S."/>
            <person name="Goldman G.H."/>
            <person name="Kimura E.T."/>
            <person name="Ferro E.S."/>
            <person name="Kuramae E.E."/>
            <person name="Lemos E.G.M."/>
            <person name="Lemos M.V.F."/>
            <person name="Mauro S.M.Z."/>
            <person name="Machado M.A."/>
            <person name="Marino C.L."/>
            <person name="Menck C.F."/>
            <person name="Nunes L.R."/>
            <person name="Oliveira R.C."/>
            <person name="Pereira G.G."/>
            <person name="Siqueira W."/>
            <person name="de Souza A.A."/>
            <person name="Tsai S.M."/>
            <person name="Zanca A.S."/>
            <person name="Simpson A.J.G."/>
            <person name="Brumbley S.M."/>
            <person name="Setubal J.C."/>
        </authorList>
    </citation>
    <scope>NUCLEOTIDE SEQUENCE [LARGE SCALE GENOMIC DNA]</scope>
    <source>
        <strain>CTCB07</strain>
    </source>
</reference>
<gene>
    <name evidence="1" type="primary">thrB</name>
    <name type="ordered locus">Lxx06890</name>
</gene>
<feature type="chain" id="PRO_0000156581" description="Homoserine kinase">
    <location>
        <begin position="1"/>
        <end position="323"/>
    </location>
</feature>
<feature type="binding site" evidence="1">
    <location>
        <begin position="97"/>
        <end position="107"/>
    </location>
    <ligand>
        <name>ATP</name>
        <dbReference type="ChEBI" id="CHEBI:30616"/>
    </ligand>
</feature>
<name>KHSE_LEIXX</name>
<protein>
    <recommendedName>
        <fullName evidence="1">Homoserine kinase</fullName>
        <shortName evidence="1">HK</shortName>
        <shortName evidence="1">HSK</shortName>
        <ecNumber evidence="1">2.7.1.39</ecNumber>
    </recommendedName>
</protein>
<accession>Q6AG73</accession>
<sequence length="323" mass="33322">MLRTVDLSGRSVAVKVPATSANLGPGFDTLGLALAQYDELRVSVRPEPGATVVVRGIGEGEVPTDETNLVVRAIAHTFESVGVELPGLSLVARNSIPHGRGMGSSGAAIVSGIMAAKGLLQGVADIDAQGLLALANDMEGHPDNVAPALFGGLTIAWVTPDGPRFKKLIVHRGVSPLVLVPERVMSTALARSLQPASVPHEDAVFNVSRSALLVAALIQSPELLHAATEDKLHQSYRASAMPETDRLITLLRTNGFAAVVSGAGPSILVLCSDPGQRLAAARLVATQGAAAWQPLMLAVDFKGATVPRIAEDAVSGEGDTTAV</sequence>
<organism>
    <name type="scientific">Leifsonia xyli subsp. xyli (strain CTCB07)</name>
    <dbReference type="NCBI Taxonomy" id="281090"/>
    <lineage>
        <taxon>Bacteria</taxon>
        <taxon>Bacillati</taxon>
        <taxon>Actinomycetota</taxon>
        <taxon>Actinomycetes</taxon>
        <taxon>Micrococcales</taxon>
        <taxon>Microbacteriaceae</taxon>
        <taxon>Leifsonia</taxon>
    </lineage>
</organism>
<keyword id="KW-0028">Amino-acid biosynthesis</keyword>
<keyword id="KW-0067">ATP-binding</keyword>
<keyword id="KW-0963">Cytoplasm</keyword>
<keyword id="KW-0418">Kinase</keyword>
<keyword id="KW-0547">Nucleotide-binding</keyword>
<keyword id="KW-1185">Reference proteome</keyword>
<keyword id="KW-0791">Threonine biosynthesis</keyword>
<keyword id="KW-0808">Transferase</keyword>
<comment type="function">
    <text evidence="1">Catalyzes the ATP-dependent phosphorylation of L-homoserine to L-homoserine phosphate.</text>
</comment>
<comment type="catalytic activity">
    <reaction evidence="1">
        <text>L-homoserine + ATP = O-phospho-L-homoserine + ADP + H(+)</text>
        <dbReference type="Rhea" id="RHEA:13985"/>
        <dbReference type="ChEBI" id="CHEBI:15378"/>
        <dbReference type="ChEBI" id="CHEBI:30616"/>
        <dbReference type="ChEBI" id="CHEBI:57476"/>
        <dbReference type="ChEBI" id="CHEBI:57590"/>
        <dbReference type="ChEBI" id="CHEBI:456216"/>
        <dbReference type="EC" id="2.7.1.39"/>
    </reaction>
</comment>
<comment type="pathway">
    <text evidence="1">Amino-acid biosynthesis; L-threonine biosynthesis; L-threonine from L-aspartate: step 4/5.</text>
</comment>
<comment type="subcellular location">
    <subcellularLocation>
        <location evidence="1">Cytoplasm</location>
    </subcellularLocation>
</comment>
<comment type="similarity">
    <text evidence="1">Belongs to the GHMP kinase family. Homoserine kinase subfamily.</text>
</comment>
<proteinExistence type="inferred from homology"/>